<comment type="function">
    <text evidence="1">Pyrophosphatase that hydrolyzes non-canonical purine nucleotides such as inosine triphosphate (ITP), deoxyinosine triphosphate (dITP) or xanthosine 5'-triphosphate (XTP) to their respective monophosphate derivatives. The enzyme does not distinguish between the deoxy- and ribose forms. Probably excludes non-canonical purines from RNA and DNA precursor pools, thus preventing their incorporation into RNA and DNA and avoiding chromosomal lesions.</text>
</comment>
<comment type="catalytic activity">
    <reaction evidence="1">
        <text>ITP + H2O = IMP + diphosphate + H(+)</text>
        <dbReference type="Rhea" id="RHEA:29399"/>
        <dbReference type="ChEBI" id="CHEBI:15377"/>
        <dbReference type="ChEBI" id="CHEBI:15378"/>
        <dbReference type="ChEBI" id="CHEBI:33019"/>
        <dbReference type="ChEBI" id="CHEBI:58053"/>
        <dbReference type="ChEBI" id="CHEBI:61402"/>
        <dbReference type="EC" id="3.6.1.66"/>
    </reaction>
    <physiologicalReaction direction="left-to-right" evidence="1">
        <dbReference type="Rhea" id="RHEA:29400"/>
    </physiologicalReaction>
</comment>
<comment type="catalytic activity">
    <reaction evidence="1">
        <text>dITP + H2O = dIMP + diphosphate + H(+)</text>
        <dbReference type="Rhea" id="RHEA:28342"/>
        <dbReference type="ChEBI" id="CHEBI:15377"/>
        <dbReference type="ChEBI" id="CHEBI:15378"/>
        <dbReference type="ChEBI" id="CHEBI:33019"/>
        <dbReference type="ChEBI" id="CHEBI:61194"/>
        <dbReference type="ChEBI" id="CHEBI:61382"/>
        <dbReference type="EC" id="3.6.1.66"/>
    </reaction>
    <physiologicalReaction direction="left-to-right" evidence="1">
        <dbReference type="Rhea" id="RHEA:28343"/>
    </physiologicalReaction>
</comment>
<comment type="catalytic activity">
    <reaction evidence="1">
        <text>XTP + H2O = XMP + diphosphate + H(+)</text>
        <dbReference type="Rhea" id="RHEA:28610"/>
        <dbReference type="ChEBI" id="CHEBI:15377"/>
        <dbReference type="ChEBI" id="CHEBI:15378"/>
        <dbReference type="ChEBI" id="CHEBI:33019"/>
        <dbReference type="ChEBI" id="CHEBI:57464"/>
        <dbReference type="ChEBI" id="CHEBI:61314"/>
        <dbReference type="EC" id="3.6.1.66"/>
    </reaction>
    <physiologicalReaction direction="left-to-right" evidence="1">
        <dbReference type="Rhea" id="RHEA:28611"/>
    </physiologicalReaction>
</comment>
<comment type="cofactor">
    <cofactor evidence="1">
        <name>Mg(2+)</name>
        <dbReference type="ChEBI" id="CHEBI:18420"/>
    </cofactor>
    <cofactor evidence="1">
        <name>Mn(2+)</name>
        <dbReference type="ChEBI" id="CHEBI:29035"/>
    </cofactor>
    <text evidence="1">Binds 1 divalent metal cation per subunit; can use either Mg(2+) or Mn(2+).</text>
</comment>
<comment type="subunit">
    <text evidence="1">Homodimer.</text>
</comment>
<comment type="subcellular location">
    <subcellularLocation>
        <location evidence="1">Cytoplasm</location>
    </subcellularLocation>
</comment>
<comment type="similarity">
    <text evidence="1">Belongs to the HAM1 NTPase family.</text>
</comment>
<sequence>MARPISFVTGNAKKLEEVRAILGARFPREIVAVKLDLPELQGEIDDICKLKCLEAARQVKGPVMVEDTCLCFNALKGLPGPYIKWFLDKLGPEGLHKLLDGWEDKSAQAVCTFAYTDRPDGEVILFQGRTEGDIVAPRGPRDFGWDPVFQPTGYDQTYAELPKPKKNEISHRYRALAKLAEHFADESK</sequence>
<name>ITPA_ANOGA</name>
<evidence type="ECO:0000255" key="1">
    <source>
        <dbReference type="HAMAP-Rule" id="MF_03148"/>
    </source>
</evidence>
<gene>
    <name type="ORF">AGAP008374</name>
</gene>
<keyword id="KW-0963">Cytoplasm</keyword>
<keyword id="KW-0378">Hydrolase</keyword>
<keyword id="KW-0460">Magnesium</keyword>
<keyword id="KW-0464">Manganese</keyword>
<keyword id="KW-0479">Metal-binding</keyword>
<keyword id="KW-0546">Nucleotide metabolism</keyword>
<keyword id="KW-0547">Nucleotide-binding</keyword>
<keyword id="KW-1185">Reference proteome</keyword>
<proteinExistence type="inferred from homology"/>
<protein>
    <recommendedName>
        <fullName evidence="1">Inosine triphosphate pyrophosphatase</fullName>
        <shortName evidence="1">ITPase</shortName>
        <shortName evidence="1">Inosine triphosphatase</shortName>
        <ecNumber evidence="1">3.6.1.66</ecNumber>
    </recommendedName>
    <alternativeName>
        <fullName evidence="1">Non-canonical purine NTP pyrophosphatase</fullName>
    </alternativeName>
    <alternativeName>
        <fullName evidence="1">Non-standard purine NTP pyrophosphatase</fullName>
    </alternativeName>
    <alternativeName>
        <fullName evidence="1">Nucleoside-triphosphate diphosphatase</fullName>
    </alternativeName>
    <alternativeName>
        <fullName evidence="1">Nucleoside-triphosphate pyrophosphatase</fullName>
        <shortName evidence="1">NTPase</shortName>
    </alternativeName>
    <alternativeName>
        <fullName evidence="1">XTP/dITP diphosphatase</fullName>
    </alternativeName>
</protein>
<accession>Q7Q4F5</accession>
<reference key="1">
    <citation type="journal article" date="2002" name="Science">
        <title>The genome sequence of the malaria mosquito Anopheles gambiae.</title>
        <authorList>
            <person name="Holt R.A."/>
            <person name="Subramanian G.M."/>
            <person name="Halpern A."/>
            <person name="Sutton G.G."/>
            <person name="Charlab R."/>
            <person name="Nusskern D.R."/>
            <person name="Wincker P."/>
            <person name="Clark A.G."/>
            <person name="Ribeiro J.M.C."/>
            <person name="Wides R."/>
            <person name="Salzberg S.L."/>
            <person name="Loftus B.J."/>
            <person name="Yandell M.D."/>
            <person name="Majoros W.H."/>
            <person name="Rusch D.B."/>
            <person name="Lai Z."/>
            <person name="Kraft C.L."/>
            <person name="Abril J.F."/>
            <person name="Anthouard V."/>
            <person name="Arensburger P."/>
            <person name="Atkinson P.W."/>
            <person name="Baden H."/>
            <person name="de Berardinis V."/>
            <person name="Baldwin D."/>
            <person name="Benes V."/>
            <person name="Biedler J."/>
            <person name="Blass C."/>
            <person name="Bolanos R."/>
            <person name="Boscus D."/>
            <person name="Barnstead M."/>
            <person name="Cai S."/>
            <person name="Center A."/>
            <person name="Chaturverdi K."/>
            <person name="Christophides G.K."/>
            <person name="Chrystal M.A.M."/>
            <person name="Clamp M."/>
            <person name="Cravchik A."/>
            <person name="Curwen V."/>
            <person name="Dana A."/>
            <person name="Delcher A."/>
            <person name="Dew I."/>
            <person name="Evans C.A."/>
            <person name="Flanigan M."/>
            <person name="Grundschober-Freimoser A."/>
            <person name="Friedli L."/>
            <person name="Gu Z."/>
            <person name="Guan P."/>
            <person name="Guigo R."/>
            <person name="Hillenmeyer M.E."/>
            <person name="Hladun S.L."/>
            <person name="Hogan J.R."/>
            <person name="Hong Y.S."/>
            <person name="Hoover J."/>
            <person name="Jaillon O."/>
            <person name="Ke Z."/>
            <person name="Kodira C.D."/>
            <person name="Kokoza E."/>
            <person name="Koutsos A."/>
            <person name="Letunic I."/>
            <person name="Levitsky A.A."/>
            <person name="Liang Y."/>
            <person name="Lin J.-J."/>
            <person name="Lobo N.F."/>
            <person name="Lopez J.R."/>
            <person name="Malek J.A."/>
            <person name="McIntosh T.C."/>
            <person name="Meister S."/>
            <person name="Miller J.R."/>
            <person name="Mobarry C."/>
            <person name="Mongin E."/>
            <person name="Murphy S.D."/>
            <person name="O'Brochta D.A."/>
            <person name="Pfannkoch C."/>
            <person name="Qi R."/>
            <person name="Regier M.A."/>
            <person name="Remington K."/>
            <person name="Shao H."/>
            <person name="Sharakhova M.V."/>
            <person name="Sitter C.D."/>
            <person name="Shetty J."/>
            <person name="Smith T.J."/>
            <person name="Strong R."/>
            <person name="Sun J."/>
            <person name="Thomasova D."/>
            <person name="Ton L.Q."/>
            <person name="Topalis P."/>
            <person name="Tu Z.J."/>
            <person name="Unger M.F."/>
            <person name="Walenz B."/>
            <person name="Wang A.H."/>
            <person name="Wang J."/>
            <person name="Wang M."/>
            <person name="Wang X."/>
            <person name="Woodford K.J."/>
            <person name="Wortman J.R."/>
            <person name="Wu M."/>
            <person name="Yao A."/>
            <person name="Zdobnov E.M."/>
            <person name="Zhang H."/>
            <person name="Zhao Q."/>
            <person name="Zhao S."/>
            <person name="Zhu S.C."/>
            <person name="Zhimulev I."/>
            <person name="Coluzzi M."/>
            <person name="della Torre A."/>
            <person name="Roth C.W."/>
            <person name="Louis C."/>
            <person name="Kalush F."/>
            <person name="Mural R.J."/>
            <person name="Myers E.W."/>
            <person name="Adams M.D."/>
            <person name="Smith H.O."/>
            <person name="Broder S."/>
            <person name="Gardner M.J."/>
            <person name="Fraser C.M."/>
            <person name="Birney E."/>
            <person name="Bork P."/>
            <person name="Brey P.T."/>
            <person name="Venter J.C."/>
            <person name="Weissenbach J."/>
            <person name="Kafatos F.C."/>
            <person name="Collins F.H."/>
            <person name="Hoffman S.L."/>
        </authorList>
    </citation>
    <scope>NUCLEOTIDE SEQUENCE [LARGE SCALE GENOMIC DNA]</scope>
    <source>
        <strain>PEST</strain>
    </source>
</reference>
<dbReference type="EC" id="3.6.1.66" evidence="1"/>
<dbReference type="EMBL" id="AAAB01008964">
    <property type="protein sequence ID" value="EAA12331.2"/>
    <property type="molecule type" value="Genomic_DNA"/>
</dbReference>
<dbReference type="SMR" id="Q7Q4F5"/>
<dbReference type="FunCoup" id="Q7Q4F5">
    <property type="interactions" value="1666"/>
</dbReference>
<dbReference type="STRING" id="7165.Q7Q4F5"/>
<dbReference type="PaxDb" id="7165-AGAP008374-PA"/>
<dbReference type="EnsemblMetazoa" id="AGAP008374-RA">
    <property type="protein sequence ID" value="AGAP008374-PA"/>
    <property type="gene ID" value="AGAP008374"/>
</dbReference>
<dbReference type="GeneID" id="1277607"/>
<dbReference type="KEGG" id="aga:1277607"/>
<dbReference type="VEuPathDB" id="VectorBase:AGAMI1_004519"/>
<dbReference type="VEuPathDB" id="VectorBase:AGAP008374"/>
<dbReference type="eggNOG" id="KOG3222">
    <property type="taxonomic scope" value="Eukaryota"/>
</dbReference>
<dbReference type="HOGENOM" id="CLU_082080_1_1_1"/>
<dbReference type="InParanoid" id="Q7Q4F5"/>
<dbReference type="OMA" id="YDPIFQP"/>
<dbReference type="PhylomeDB" id="Q7Q4F5"/>
<dbReference type="Proteomes" id="UP000007062">
    <property type="component" value="Chromosome 3R"/>
</dbReference>
<dbReference type="GO" id="GO:0005737">
    <property type="term" value="C:cytoplasm"/>
    <property type="evidence" value="ECO:0000318"/>
    <property type="project" value="GO_Central"/>
</dbReference>
<dbReference type="GO" id="GO:0035870">
    <property type="term" value="F:dITP diphosphatase activity"/>
    <property type="evidence" value="ECO:0007669"/>
    <property type="project" value="RHEA"/>
</dbReference>
<dbReference type="GO" id="GO:0036220">
    <property type="term" value="F:ITP diphosphatase activity"/>
    <property type="evidence" value="ECO:0007669"/>
    <property type="project" value="RHEA"/>
</dbReference>
<dbReference type="GO" id="GO:0046872">
    <property type="term" value="F:metal ion binding"/>
    <property type="evidence" value="ECO:0007669"/>
    <property type="project" value="UniProtKB-KW"/>
</dbReference>
<dbReference type="GO" id="GO:0047429">
    <property type="term" value="F:nucleoside triphosphate diphosphatase activity"/>
    <property type="evidence" value="ECO:0000318"/>
    <property type="project" value="GO_Central"/>
</dbReference>
<dbReference type="GO" id="GO:0000166">
    <property type="term" value="F:nucleotide binding"/>
    <property type="evidence" value="ECO:0007669"/>
    <property type="project" value="UniProtKB-KW"/>
</dbReference>
<dbReference type="GO" id="GO:0036222">
    <property type="term" value="F:XTP diphosphatase activity"/>
    <property type="evidence" value="ECO:0007669"/>
    <property type="project" value="RHEA"/>
</dbReference>
<dbReference type="GO" id="GO:0009204">
    <property type="term" value="P:deoxyribonucleoside triphosphate catabolic process"/>
    <property type="evidence" value="ECO:0007669"/>
    <property type="project" value="UniProtKB-UniRule"/>
</dbReference>
<dbReference type="GO" id="GO:0009143">
    <property type="term" value="P:nucleoside triphosphate catabolic process"/>
    <property type="evidence" value="ECO:0000318"/>
    <property type="project" value="GO_Central"/>
</dbReference>
<dbReference type="GO" id="GO:0009117">
    <property type="term" value="P:nucleotide metabolic process"/>
    <property type="evidence" value="ECO:0007669"/>
    <property type="project" value="UniProtKB-KW"/>
</dbReference>
<dbReference type="CDD" id="cd00515">
    <property type="entry name" value="HAM1"/>
    <property type="match status" value="1"/>
</dbReference>
<dbReference type="FunFam" id="3.90.950.10:FF:000003">
    <property type="entry name" value="Inosine triphosphate pyrophosphatase"/>
    <property type="match status" value="1"/>
</dbReference>
<dbReference type="Gene3D" id="3.90.950.10">
    <property type="match status" value="1"/>
</dbReference>
<dbReference type="HAMAP" id="MF_03148">
    <property type="entry name" value="HAM1_NTPase"/>
    <property type="match status" value="1"/>
</dbReference>
<dbReference type="InterPro" id="IPR027502">
    <property type="entry name" value="ITPase"/>
</dbReference>
<dbReference type="InterPro" id="IPR029001">
    <property type="entry name" value="ITPase-like_fam"/>
</dbReference>
<dbReference type="InterPro" id="IPR002637">
    <property type="entry name" value="RdgB/HAM1"/>
</dbReference>
<dbReference type="NCBIfam" id="TIGR00042">
    <property type="entry name" value="RdgB/HAM1 family non-canonical purine NTP pyrophosphatase"/>
    <property type="match status" value="1"/>
</dbReference>
<dbReference type="PANTHER" id="PTHR11067:SF9">
    <property type="entry name" value="INOSINE TRIPHOSPHATE PYROPHOSPHATASE"/>
    <property type="match status" value="1"/>
</dbReference>
<dbReference type="PANTHER" id="PTHR11067">
    <property type="entry name" value="INOSINE TRIPHOSPHATE PYROPHOSPHATASE/HAM1 PROTEIN"/>
    <property type="match status" value="1"/>
</dbReference>
<dbReference type="Pfam" id="PF01725">
    <property type="entry name" value="Ham1p_like"/>
    <property type="match status" value="1"/>
</dbReference>
<dbReference type="SUPFAM" id="SSF52972">
    <property type="entry name" value="ITPase-like"/>
    <property type="match status" value="1"/>
</dbReference>
<feature type="chain" id="PRO_0000413107" description="Inosine triphosphate pyrophosphatase">
    <location>
        <begin position="1"/>
        <end position="188"/>
    </location>
</feature>
<feature type="binding site" evidence="1">
    <location>
        <begin position="9"/>
        <end position="14"/>
    </location>
    <ligand>
        <name>ITP</name>
        <dbReference type="ChEBI" id="CHEBI:61402"/>
    </ligand>
</feature>
<feature type="binding site" evidence="1">
    <location>
        <position position="39"/>
    </location>
    <ligand>
        <name>Mg(2+)</name>
        <dbReference type="ChEBI" id="CHEBI:18420"/>
    </ligand>
</feature>
<feature type="binding site" evidence="1">
    <location>
        <position position="51"/>
    </location>
    <ligand>
        <name>ITP</name>
        <dbReference type="ChEBI" id="CHEBI:61402"/>
    </ligand>
</feature>
<feature type="binding site" evidence="1">
    <location>
        <begin position="67"/>
        <end position="68"/>
    </location>
    <ligand>
        <name>ITP</name>
        <dbReference type="ChEBI" id="CHEBI:61402"/>
    </ligand>
</feature>
<feature type="binding site" evidence="1">
    <location>
        <position position="84"/>
    </location>
    <ligand>
        <name>ITP</name>
        <dbReference type="ChEBI" id="CHEBI:61402"/>
    </ligand>
</feature>
<feature type="binding site" evidence="1">
    <location>
        <begin position="143"/>
        <end position="146"/>
    </location>
    <ligand>
        <name>ITP</name>
        <dbReference type="ChEBI" id="CHEBI:61402"/>
    </ligand>
</feature>
<feature type="binding site" evidence="1">
    <location>
        <position position="166"/>
    </location>
    <ligand>
        <name>ITP</name>
        <dbReference type="ChEBI" id="CHEBI:61402"/>
    </ligand>
</feature>
<feature type="binding site" evidence="1">
    <location>
        <begin position="171"/>
        <end position="172"/>
    </location>
    <ligand>
        <name>ITP</name>
        <dbReference type="ChEBI" id="CHEBI:61402"/>
    </ligand>
</feature>
<organism>
    <name type="scientific">Anopheles gambiae</name>
    <name type="common">African malaria mosquito</name>
    <dbReference type="NCBI Taxonomy" id="7165"/>
    <lineage>
        <taxon>Eukaryota</taxon>
        <taxon>Metazoa</taxon>
        <taxon>Ecdysozoa</taxon>
        <taxon>Arthropoda</taxon>
        <taxon>Hexapoda</taxon>
        <taxon>Insecta</taxon>
        <taxon>Pterygota</taxon>
        <taxon>Neoptera</taxon>
        <taxon>Endopterygota</taxon>
        <taxon>Diptera</taxon>
        <taxon>Nematocera</taxon>
        <taxon>Culicoidea</taxon>
        <taxon>Culicidae</taxon>
        <taxon>Anophelinae</taxon>
        <taxon>Anopheles</taxon>
    </lineage>
</organism>